<gene>
    <name type="primary">ATG3</name>
    <name type="ORF">PICST_36624</name>
</gene>
<accession>A3LX85</accession>
<evidence type="ECO:0000250" key="1"/>
<evidence type="ECO:0000256" key="2">
    <source>
        <dbReference type="SAM" id="MobiDB-lite"/>
    </source>
</evidence>
<evidence type="ECO:0000305" key="3"/>
<feature type="chain" id="PRO_0000317828" description="Autophagy-related protein 3">
    <location>
        <begin position="1"/>
        <end position="318"/>
    </location>
</feature>
<feature type="region of interest" description="Flexible region" evidence="1">
    <location>
        <begin position="82"/>
        <end position="161"/>
    </location>
</feature>
<feature type="region of interest" description="Disordered" evidence="2">
    <location>
        <begin position="83"/>
        <end position="104"/>
    </location>
</feature>
<feature type="region of interest" description="Handle region" evidence="1">
    <location>
        <begin position="235"/>
        <end position="293"/>
    </location>
</feature>
<feature type="region of interest" description="Disordered" evidence="2">
    <location>
        <begin position="244"/>
        <end position="284"/>
    </location>
</feature>
<feature type="compositionally biased region" description="Acidic residues" evidence="2">
    <location>
        <begin position="89"/>
        <end position="103"/>
    </location>
</feature>
<feature type="compositionally biased region" description="Basic and acidic residues" evidence="2">
    <location>
        <begin position="249"/>
        <end position="261"/>
    </location>
</feature>
<feature type="compositionally biased region" description="Basic and acidic residues" evidence="2">
    <location>
        <begin position="268"/>
        <end position="278"/>
    </location>
</feature>
<feature type="active site" description="Glycyl thioester intermediate" evidence="1">
    <location>
        <position position="231"/>
    </location>
</feature>
<proteinExistence type="inferred from homology"/>
<keyword id="KW-0072">Autophagy</keyword>
<keyword id="KW-0963">Cytoplasm</keyword>
<keyword id="KW-0653">Protein transport</keyword>
<keyword id="KW-1185">Reference proteome</keyword>
<keyword id="KW-0813">Transport</keyword>
<keyword id="KW-0833">Ubl conjugation pathway</keyword>
<organism>
    <name type="scientific">Scheffersomyces stipitis (strain ATCC 58785 / CBS 6054 / NBRC 10063 / NRRL Y-11545)</name>
    <name type="common">Yeast</name>
    <name type="synonym">Pichia stipitis</name>
    <dbReference type="NCBI Taxonomy" id="322104"/>
    <lineage>
        <taxon>Eukaryota</taxon>
        <taxon>Fungi</taxon>
        <taxon>Dikarya</taxon>
        <taxon>Ascomycota</taxon>
        <taxon>Saccharomycotina</taxon>
        <taxon>Pichiomycetes</taxon>
        <taxon>Debaryomycetaceae</taxon>
        <taxon>Scheffersomyces</taxon>
    </lineage>
</organism>
<protein>
    <recommendedName>
        <fullName>Autophagy-related protein 3</fullName>
    </recommendedName>
    <alternativeName>
        <fullName>Autophagy-related E2-like conjugation enzyme ATG3</fullName>
    </alternativeName>
</protein>
<name>ATG3_PICST</name>
<dbReference type="EMBL" id="CP000500">
    <property type="protein sequence ID" value="ABN67417.2"/>
    <property type="molecule type" value="Genomic_DNA"/>
</dbReference>
<dbReference type="RefSeq" id="XP_001385446.2">
    <property type="nucleotide sequence ID" value="XM_001385409.1"/>
</dbReference>
<dbReference type="SMR" id="A3LX85"/>
<dbReference type="FunCoup" id="A3LX85">
    <property type="interactions" value="1099"/>
</dbReference>
<dbReference type="STRING" id="322104.A3LX85"/>
<dbReference type="GeneID" id="4839760"/>
<dbReference type="KEGG" id="pic:PICST_36624"/>
<dbReference type="eggNOG" id="KOG2981">
    <property type="taxonomic scope" value="Eukaryota"/>
</dbReference>
<dbReference type="HOGENOM" id="CLU_027518_2_0_1"/>
<dbReference type="InParanoid" id="A3LX85"/>
<dbReference type="OMA" id="HCPTWSW"/>
<dbReference type="OrthoDB" id="1584384at2759"/>
<dbReference type="Proteomes" id="UP000002258">
    <property type="component" value="Chromosome 6"/>
</dbReference>
<dbReference type="GO" id="GO:0005829">
    <property type="term" value="C:cytosol"/>
    <property type="evidence" value="ECO:0007669"/>
    <property type="project" value="EnsemblFungi"/>
</dbReference>
<dbReference type="GO" id="GO:0005739">
    <property type="term" value="C:mitochondrion"/>
    <property type="evidence" value="ECO:0007669"/>
    <property type="project" value="EnsemblFungi"/>
</dbReference>
<dbReference type="GO" id="GO:0061908">
    <property type="term" value="C:phagophore"/>
    <property type="evidence" value="ECO:0007669"/>
    <property type="project" value="EnsemblFungi"/>
</dbReference>
<dbReference type="GO" id="GO:0000407">
    <property type="term" value="C:phagophore assembly site"/>
    <property type="evidence" value="ECO:0007669"/>
    <property type="project" value="EnsemblFungi"/>
</dbReference>
<dbReference type="GO" id="GO:0019776">
    <property type="term" value="F:Atg8-family ligase activity"/>
    <property type="evidence" value="ECO:0007669"/>
    <property type="project" value="EnsemblFungi"/>
</dbReference>
<dbReference type="GO" id="GO:0000045">
    <property type="term" value="P:autophagosome assembly"/>
    <property type="evidence" value="ECO:0007669"/>
    <property type="project" value="EnsemblFungi"/>
</dbReference>
<dbReference type="GO" id="GO:0000422">
    <property type="term" value="P:autophagy of mitochondrion"/>
    <property type="evidence" value="ECO:0007669"/>
    <property type="project" value="EnsemblFungi"/>
</dbReference>
<dbReference type="GO" id="GO:0032258">
    <property type="term" value="P:cytoplasm to vacuole targeting by the Cvt pathway"/>
    <property type="evidence" value="ECO:0007669"/>
    <property type="project" value="EnsemblFungi"/>
</dbReference>
<dbReference type="GO" id="GO:0061723">
    <property type="term" value="P:glycophagy"/>
    <property type="evidence" value="ECO:0007669"/>
    <property type="project" value="TreeGrafter"/>
</dbReference>
<dbReference type="GO" id="GO:0034727">
    <property type="term" value="P:piecemeal microautophagy of the nucleus"/>
    <property type="evidence" value="ECO:0007669"/>
    <property type="project" value="EnsemblFungi"/>
</dbReference>
<dbReference type="GO" id="GO:0006612">
    <property type="term" value="P:protein targeting to membrane"/>
    <property type="evidence" value="ECO:0007669"/>
    <property type="project" value="EnsemblFungi"/>
</dbReference>
<dbReference type="Gene3D" id="3.30.1460.50">
    <property type="match status" value="1"/>
</dbReference>
<dbReference type="InterPro" id="IPR007135">
    <property type="entry name" value="Atg3/Atg10"/>
</dbReference>
<dbReference type="PANTHER" id="PTHR12866">
    <property type="entry name" value="UBIQUITIN-LIKE-CONJUGATING ENZYME ATG3"/>
    <property type="match status" value="1"/>
</dbReference>
<dbReference type="PANTHER" id="PTHR12866:SF2">
    <property type="entry name" value="UBIQUITIN-LIKE-CONJUGATING ENZYME ATG3"/>
    <property type="match status" value="1"/>
</dbReference>
<dbReference type="Pfam" id="PF03987">
    <property type="entry name" value="Autophagy_act_C"/>
    <property type="match status" value="1"/>
</dbReference>
<sequence>MLRSKLSSLREYLTPINHNSNFSTTGEISPEEFVQAGDYLVYKFPTWQWSTCPKNLQKSFLPADKQFLITRHVPSYQRASNYLTGGNVDFDDDEEYEDDEEGDGWVKSRKVVSVTKPQDGQEEEPQEINDIDDLIDVTAEGAEDDGDNLEDFDDLDIRNDGGSVRKYDMYITYSTSYRVPKMYLVGFNANGIPLTPDQMFEDINADYKDKTATIENLPVAHNTTSVSIHPCKHSSVMKVLMKHSKSKKTREEVNHLSEELGKTNISDKSQEDTGKDAEAAAGPEAEDSIRVDQYLVIFLKFIASVTPGIEYDYTMDAL</sequence>
<reference key="1">
    <citation type="journal article" date="2007" name="Nat. Biotechnol.">
        <title>Genome sequence of the lignocellulose-bioconverting and xylose-fermenting yeast Pichia stipitis.</title>
        <authorList>
            <person name="Jeffries T.W."/>
            <person name="Grigoriev I.V."/>
            <person name="Grimwood J."/>
            <person name="Laplaza J.M."/>
            <person name="Aerts A."/>
            <person name="Salamov A."/>
            <person name="Schmutz J."/>
            <person name="Lindquist E."/>
            <person name="Dehal P."/>
            <person name="Shapiro H."/>
            <person name="Jin Y.-S."/>
            <person name="Passoth V."/>
            <person name="Richardson P.M."/>
        </authorList>
    </citation>
    <scope>NUCLEOTIDE SEQUENCE [LARGE SCALE GENOMIC DNA]</scope>
    <source>
        <strain>ATCC 58785 / CBS 6054 / NBRC 10063 / NRRL Y-11545</strain>
    </source>
</reference>
<comment type="function">
    <text evidence="1">E2 conjugating enzyme required for the cytoplasm to vacuole transport (Cvt) and autophagy. Required for selective autophagic degradation of the nucleus (nucleophagy) as well as for mitophagy which contributes to regulate mitochondrial quantity and quality by eliminating the mitochondria to a basal level to fulfill cellular energy requirements and preventing excess ROS production. Responsible for the E2-like covalent binding of phosphatidylethanolamine to the C-terminal Gly of ATG8. The ATG12-ATG5 conjugate plays a role of an E3 and promotes the transfer of ATG8 from ATG3 to phosphatidylethanolamine (PE). This step is required for the membrane association of ATG8. The formation of the ATG8-phosphatidylethanolamine conjugate is essential for autophagy and for the cytoplasm to vacuole transport (Cvt). The ATG8-PE conjugate mediates tethering between adjacent membranes and stimulates membrane hemifusion, leading to expansion of the autophagosomal membrane during autophagy (By similarity).</text>
</comment>
<comment type="subunit">
    <text evidence="1">Monomer. Interacts with ATG8 through an intermediate thioester bond through the C-terminal Gly of ATG8. Also interacts with the 40 amino acid C-terminal region of the E1-like ATG7 enzyme. Also interacts with the ATG12-ATG5 conjugate.</text>
</comment>
<comment type="subcellular location">
    <subcellularLocation>
        <location evidence="1">Cytoplasm</location>
    </subcellularLocation>
</comment>
<comment type="domain">
    <text evidence="1">The N-terminal region is involved in phosphatidylethanolamine-binding and is required for ATG8-PE conjugation.</text>
</comment>
<comment type="domain">
    <text evidence="1">The flexible region (FR) is required for ATG7-binding.</text>
</comment>
<comment type="domain">
    <text evidence="1">The handle region (HR) contains the ATG8 interaction motif (AIM) and mediates binding to ATG8. It is crucial for the cytoplasm-to-vacuole targeting pathway (By similarity).</text>
</comment>
<comment type="similarity">
    <text evidence="3">Belongs to the ATG3 family.</text>
</comment>